<reference key="1">
    <citation type="journal article" date="2008" name="Genome Res.">
        <title>Comparative genome analysis of Salmonella enteritidis PT4 and Salmonella gallinarum 287/91 provides insights into evolutionary and host adaptation pathways.</title>
        <authorList>
            <person name="Thomson N.R."/>
            <person name="Clayton D.J."/>
            <person name="Windhorst D."/>
            <person name="Vernikos G."/>
            <person name="Davidson S."/>
            <person name="Churcher C."/>
            <person name="Quail M.A."/>
            <person name="Stevens M."/>
            <person name="Jones M.A."/>
            <person name="Watson M."/>
            <person name="Barron A."/>
            <person name="Layton A."/>
            <person name="Pickard D."/>
            <person name="Kingsley R.A."/>
            <person name="Bignell A."/>
            <person name="Clark L."/>
            <person name="Harris B."/>
            <person name="Ormond D."/>
            <person name="Abdellah Z."/>
            <person name="Brooks K."/>
            <person name="Cherevach I."/>
            <person name="Chillingworth T."/>
            <person name="Woodward J."/>
            <person name="Norberczak H."/>
            <person name="Lord A."/>
            <person name="Arrowsmith C."/>
            <person name="Jagels K."/>
            <person name="Moule S."/>
            <person name="Mungall K."/>
            <person name="Saunders M."/>
            <person name="Whitehead S."/>
            <person name="Chabalgoity J.A."/>
            <person name="Maskell D."/>
            <person name="Humphreys T."/>
            <person name="Roberts M."/>
            <person name="Barrow P.A."/>
            <person name="Dougan G."/>
            <person name="Parkhill J."/>
        </authorList>
    </citation>
    <scope>NUCLEOTIDE SEQUENCE [LARGE SCALE GENOMIC DNA]</scope>
    <source>
        <strain>287/91 / NCTC 13346</strain>
    </source>
</reference>
<gene>
    <name evidence="1" type="primary">nikR</name>
    <name type="ordered locus">SG3853</name>
</gene>
<organism>
    <name type="scientific">Salmonella gallinarum (strain 287/91 / NCTC 13346)</name>
    <dbReference type="NCBI Taxonomy" id="550538"/>
    <lineage>
        <taxon>Bacteria</taxon>
        <taxon>Pseudomonadati</taxon>
        <taxon>Pseudomonadota</taxon>
        <taxon>Gammaproteobacteria</taxon>
        <taxon>Enterobacterales</taxon>
        <taxon>Enterobacteriaceae</taxon>
        <taxon>Salmonella</taxon>
    </lineage>
</organism>
<evidence type="ECO:0000255" key="1">
    <source>
        <dbReference type="HAMAP-Rule" id="MF_00476"/>
    </source>
</evidence>
<keyword id="KW-0238">DNA-binding</keyword>
<keyword id="KW-0479">Metal-binding</keyword>
<keyword id="KW-0533">Nickel</keyword>
<keyword id="KW-0678">Repressor</keyword>
<keyword id="KW-0804">Transcription</keyword>
<keyword id="KW-0805">Transcription regulation</keyword>
<comment type="function">
    <text evidence="1">Transcriptional repressor of the nikABCDE operon. Is active in the presence of excessive concentrations of intracellular nickel.</text>
</comment>
<comment type="cofactor">
    <cofactor evidence="1">
        <name>Ni(2+)</name>
        <dbReference type="ChEBI" id="CHEBI:49786"/>
    </cofactor>
    <text evidence="1">Binds 1 nickel ion per subunit.</text>
</comment>
<comment type="subunit">
    <text evidence="1">Homotetramer.</text>
</comment>
<comment type="similarity">
    <text evidence="1">Belongs to the transcriptional regulatory CopG/NikR family.</text>
</comment>
<accession>B5RGU2</accession>
<feature type="chain" id="PRO_1000125839" description="Nickel-responsive regulator">
    <location>
        <begin position="1"/>
        <end position="133"/>
    </location>
</feature>
<feature type="binding site" evidence="1">
    <location>
        <position position="76"/>
    </location>
    <ligand>
        <name>Ni(2+)</name>
        <dbReference type="ChEBI" id="CHEBI:49786"/>
    </ligand>
</feature>
<feature type="binding site" evidence="1">
    <location>
        <position position="87"/>
    </location>
    <ligand>
        <name>Ni(2+)</name>
        <dbReference type="ChEBI" id="CHEBI:49786"/>
    </ligand>
</feature>
<feature type="binding site" evidence="1">
    <location>
        <position position="89"/>
    </location>
    <ligand>
        <name>Ni(2+)</name>
        <dbReference type="ChEBI" id="CHEBI:49786"/>
    </ligand>
</feature>
<feature type="binding site" evidence="1">
    <location>
        <position position="95"/>
    </location>
    <ligand>
        <name>Ni(2+)</name>
        <dbReference type="ChEBI" id="CHEBI:49786"/>
    </ligand>
</feature>
<name>NIKR_SALG2</name>
<dbReference type="EMBL" id="AM933173">
    <property type="protein sequence ID" value="CAR39629.1"/>
    <property type="molecule type" value="Genomic_DNA"/>
</dbReference>
<dbReference type="RefSeq" id="WP_001190057.1">
    <property type="nucleotide sequence ID" value="NC_011274.1"/>
</dbReference>
<dbReference type="SMR" id="B5RGU2"/>
<dbReference type="KEGG" id="seg:SG3853"/>
<dbReference type="HOGENOM" id="CLU_113319_1_4_6"/>
<dbReference type="Proteomes" id="UP000008321">
    <property type="component" value="Chromosome"/>
</dbReference>
<dbReference type="GO" id="GO:0003700">
    <property type="term" value="F:DNA-binding transcription factor activity"/>
    <property type="evidence" value="ECO:0007669"/>
    <property type="project" value="UniProtKB-UniRule"/>
</dbReference>
<dbReference type="GO" id="GO:0016151">
    <property type="term" value="F:nickel cation binding"/>
    <property type="evidence" value="ECO:0007669"/>
    <property type="project" value="UniProtKB-UniRule"/>
</dbReference>
<dbReference type="GO" id="GO:0043565">
    <property type="term" value="F:sequence-specific DNA binding"/>
    <property type="evidence" value="ECO:0007669"/>
    <property type="project" value="UniProtKB-ARBA"/>
</dbReference>
<dbReference type="GO" id="GO:0010045">
    <property type="term" value="P:response to nickel cation"/>
    <property type="evidence" value="ECO:0007669"/>
    <property type="project" value="InterPro"/>
</dbReference>
<dbReference type="CDD" id="cd22231">
    <property type="entry name" value="RHH_NikR_HicB-like"/>
    <property type="match status" value="1"/>
</dbReference>
<dbReference type="FunFam" id="1.10.1220.10:FF:000001">
    <property type="entry name" value="Nickel-responsive regulator"/>
    <property type="match status" value="1"/>
</dbReference>
<dbReference type="FunFam" id="3.30.70.1150:FF:000002">
    <property type="entry name" value="Nickel-responsive regulator"/>
    <property type="match status" value="1"/>
</dbReference>
<dbReference type="Gene3D" id="3.30.70.1150">
    <property type="entry name" value="ACT-like. Chain A, domain 2"/>
    <property type="match status" value="1"/>
</dbReference>
<dbReference type="Gene3D" id="1.10.1220.10">
    <property type="entry name" value="Met repressor-like"/>
    <property type="match status" value="1"/>
</dbReference>
<dbReference type="HAMAP" id="MF_00476">
    <property type="entry name" value="NikR"/>
    <property type="match status" value="1"/>
</dbReference>
<dbReference type="InterPro" id="IPR027271">
    <property type="entry name" value="Acetolactate_synth/TF_NikR_C"/>
</dbReference>
<dbReference type="InterPro" id="IPR045865">
    <property type="entry name" value="ACT-like_dom_sf"/>
</dbReference>
<dbReference type="InterPro" id="IPR013321">
    <property type="entry name" value="Arc_rbn_hlx_hlx"/>
</dbReference>
<dbReference type="InterPro" id="IPR002145">
    <property type="entry name" value="CopG"/>
</dbReference>
<dbReference type="InterPro" id="IPR050192">
    <property type="entry name" value="CopG/NikR_regulator"/>
</dbReference>
<dbReference type="InterPro" id="IPR022988">
    <property type="entry name" value="Ni_resp_reg_NikR"/>
</dbReference>
<dbReference type="InterPro" id="IPR014160">
    <property type="entry name" value="Nickel_NikR_proteobac"/>
</dbReference>
<dbReference type="InterPro" id="IPR010985">
    <property type="entry name" value="Ribbon_hlx_hlx"/>
</dbReference>
<dbReference type="InterPro" id="IPR014864">
    <property type="entry name" value="TF_NikR_Ni-bd_C"/>
</dbReference>
<dbReference type="NCBIfam" id="TIGR02793">
    <property type="entry name" value="nikR"/>
    <property type="match status" value="1"/>
</dbReference>
<dbReference type="NCBIfam" id="NF002815">
    <property type="entry name" value="PRK02967.1"/>
    <property type="match status" value="1"/>
</dbReference>
<dbReference type="NCBIfam" id="NF003381">
    <property type="entry name" value="PRK04460.1"/>
    <property type="match status" value="1"/>
</dbReference>
<dbReference type="PANTHER" id="PTHR34719">
    <property type="entry name" value="NICKEL-RESPONSIVE REGULATOR"/>
    <property type="match status" value="1"/>
</dbReference>
<dbReference type="PANTHER" id="PTHR34719:SF2">
    <property type="entry name" value="NICKEL-RESPONSIVE REGULATOR"/>
    <property type="match status" value="1"/>
</dbReference>
<dbReference type="Pfam" id="PF08753">
    <property type="entry name" value="NikR_C"/>
    <property type="match status" value="1"/>
</dbReference>
<dbReference type="Pfam" id="PF01402">
    <property type="entry name" value="RHH_1"/>
    <property type="match status" value="1"/>
</dbReference>
<dbReference type="SUPFAM" id="SSF55021">
    <property type="entry name" value="ACT-like"/>
    <property type="match status" value="1"/>
</dbReference>
<dbReference type="SUPFAM" id="SSF47598">
    <property type="entry name" value="Ribbon-helix-helix"/>
    <property type="match status" value="1"/>
</dbReference>
<protein>
    <recommendedName>
        <fullName evidence="1">Nickel-responsive regulator</fullName>
    </recommendedName>
</protein>
<sequence>MQRVTITLDDDLLETLDSLSQRRGYNNRSEAIRDILRGALAQEATQEHGTQGFAVLSYVYEHEKRDLASRIVSTQHHHHDLSVATLHVHINHDDCLEIAVLKGDMGDVQHFADDVIAQRGVRHGHLQCLPKED</sequence>
<proteinExistence type="inferred from homology"/>